<evidence type="ECO:0000250" key="1">
    <source>
        <dbReference type="UniProtKB" id="P67790"/>
    </source>
</evidence>
<evidence type="ECO:0000255" key="2"/>
<evidence type="ECO:0000269" key="3">
    <source>
    </source>
</evidence>
<evidence type="ECO:0000303" key="4">
    <source>
    </source>
</evidence>
<evidence type="ECO:0000305" key="5"/>
<accession>P85691</accession>
<comment type="function">
    <text evidence="5">Hypertrehalosaemic factors are neuropeptides that elevate the level of trehalose in the hemolymph (trehalose is the major carbohydrate in the hemolymph of insects).</text>
</comment>
<comment type="subcellular location">
    <subcellularLocation>
        <location evidence="5">Secreted</location>
    </subcellularLocation>
</comment>
<comment type="similarity">
    <text evidence="2">Belongs to the AKH/HRTH/RPCH family.</text>
</comment>
<feature type="peptide" id="PRO_0000378659" description="Hypertrehalosaemic factor" evidence="3">
    <location>
        <begin position="1"/>
        <end position="10"/>
    </location>
</feature>
<feature type="modified residue" description="Pyrrolidone carboxylic acid" evidence="3">
    <location>
        <position position="1"/>
    </location>
</feature>
<feature type="modified residue" description="Threonine amide" evidence="3">
    <location>
        <position position="10"/>
    </location>
</feature>
<sequence>QVNFSPGWGT</sequence>
<proteinExistence type="evidence at protein level"/>
<protein>
    <recommendedName>
        <fullName evidence="1">Hypertrehalosaemic factor</fullName>
    </recommendedName>
    <alternativeName>
        <fullName evidence="4">Adipokinetic hormone 1</fullName>
        <shortName evidence="4">PanS2-AKH-1</shortName>
    </alternativeName>
    <alternativeName>
        <fullName evidence="1">Hypertrehalosaemic neuropeptide</fullName>
    </alternativeName>
</protein>
<name>HTF_PANSB</name>
<keyword id="KW-0027">Amidation</keyword>
<keyword id="KW-0903">Direct protein sequencing</keyword>
<keyword id="KW-0372">Hormone</keyword>
<keyword id="KW-0527">Neuropeptide</keyword>
<keyword id="KW-0873">Pyrrolidone carboxylic acid</keyword>
<keyword id="KW-0964">Secreted</keyword>
<organism>
    <name type="scientific">Panesthia sp. (strain BF-2008)</name>
    <name type="common">Cockroach</name>
    <dbReference type="NCBI Taxonomy" id="521518"/>
    <lineage>
        <taxon>Eukaryota</taxon>
        <taxon>Metazoa</taxon>
        <taxon>Ecdysozoa</taxon>
        <taxon>Arthropoda</taxon>
        <taxon>Hexapoda</taxon>
        <taxon>Insecta</taxon>
        <taxon>Pterygota</taxon>
        <taxon>Neoptera</taxon>
        <taxon>Polyneoptera</taxon>
        <taxon>Dictyoptera</taxon>
        <taxon>Blattodea</taxon>
        <taxon>Blaberoidea</taxon>
        <taxon>Blaberidae</taxon>
        <taxon>Panesthiinae</taxon>
        <taxon>Panesthia</taxon>
    </lineage>
</organism>
<reference evidence="5" key="1">
    <citation type="journal article" date="2009" name="BMC Evol. Biol.">
        <title>A proteomic approach for studying insect phylogeny: CAPA peptides of ancient insect taxa (Dictyoptera, Blattoptera) as a test case.</title>
        <authorList>
            <person name="Roth S."/>
            <person name="Fromm B."/>
            <person name="Gaede G."/>
            <person name="Predel R."/>
        </authorList>
    </citation>
    <scope>PROTEIN SEQUENCE</scope>
    <scope>PYROGLUTAMATE FORMATION AT GLN-1</scope>
    <scope>AMIDATION AT THR-10</scope>
    <source>
        <tissue evidence="3">Corpora cardiaca</tissue>
    </source>
</reference>
<dbReference type="GO" id="GO:0005576">
    <property type="term" value="C:extracellular region"/>
    <property type="evidence" value="ECO:0007669"/>
    <property type="project" value="UniProtKB-SubCell"/>
</dbReference>
<dbReference type="GO" id="GO:0005179">
    <property type="term" value="F:hormone activity"/>
    <property type="evidence" value="ECO:0007669"/>
    <property type="project" value="UniProtKB-KW"/>
</dbReference>
<dbReference type="GO" id="GO:0007218">
    <property type="term" value="P:neuropeptide signaling pathway"/>
    <property type="evidence" value="ECO:0007669"/>
    <property type="project" value="UniProtKB-KW"/>
</dbReference>
<dbReference type="InterPro" id="IPR002047">
    <property type="entry name" value="Adipokinetic_hormone_CS"/>
</dbReference>
<dbReference type="PROSITE" id="PS00256">
    <property type="entry name" value="AKH"/>
    <property type="match status" value="1"/>
</dbReference>